<organism>
    <name type="scientific">Pyricularia oryzae (strain 70-15 / ATCC MYA-4617 / FGSC 8958)</name>
    <name type="common">Rice blast fungus</name>
    <name type="synonym">Magnaporthe oryzae</name>
    <dbReference type="NCBI Taxonomy" id="242507"/>
    <lineage>
        <taxon>Eukaryota</taxon>
        <taxon>Fungi</taxon>
        <taxon>Dikarya</taxon>
        <taxon>Ascomycota</taxon>
        <taxon>Pezizomycotina</taxon>
        <taxon>Sordariomycetes</taxon>
        <taxon>Sordariomycetidae</taxon>
        <taxon>Magnaporthales</taxon>
        <taxon>Pyriculariaceae</taxon>
        <taxon>Pyricularia</taxon>
    </lineage>
</organism>
<reference key="1">
    <citation type="journal article" date="2005" name="Nature">
        <title>The genome sequence of the rice blast fungus Magnaporthe grisea.</title>
        <authorList>
            <person name="Dean R.A."/>
            <person name="Talbot N.J."/>
            <person name="Ebbole D.J."/>
            <person name="Farman M.L."/>
            <person name="Mitchell T.K."/>
            <person name="Orbach M.J."/>
            <person name="Thon M.R."/>
            <person name="Kulkarni R."/>
            <person name="Xu J.-R."/>
            <person name="Pan H."/>
            <person name="Read N.D."/>
            <person name="Lee Y.-H."/>
            <person name="Carbone I."/>
            <person name="Brown D."/>
            <person name="Oh Y.Y."/>
            <person name="Donofrio N."/>
            <person name="Jeong J.S."/>
            <person name="Soanes D.M."/>
            <person name="Djonovic S."/>
            <person name="Kolomiets E."/>
            <person name="Rehmeyer C."/>
            <person name="Li W."/>
            <person name="Harding M."/>
            <person name="Kim S."/>
            <person name="Lebrun M.-H."/>
            <person name="Bohnert H."/>
            <person name="Coughlan S."/>
            <person name="Butler J."/>
            <person name="Calvo S.E."/>
            <person name="Ma L.-J."/>
            <person name="Nicol R."/>
            <person name="Purcell S."/>
            <person name="Nusbaum C."/>
            <person name="Galagan J.E."/>
            <person name="Birren B.W."/>
        </authorList>
    </citation>
    <scope>NUCLEOTIDE SEQUENCE [LARGE SCALE GENOMIC DNA]</scope>
    <source>
        <strain>70-15 / ATCC MYA-4617 / FGSC 8958</strain>
    </source>
</reference>
<reference key="2">
    <citation type="journal article" date="2015" name="Nat. Chem. Biol.">
        <title>A fungal monooxygenase-derived jasmonate attenuates host innate immunity.</title>
        <authorList>
            <person name="Patkar R.N."/>
            <person name="Benke P.I."/>
            <person name="Qu Z."/>
            <person name="Chen Y.Y."/>
            <person name="Yang F."/>
            <person name="Swarup S."/>
            <person name="Naqvi N.I."/>
        </authorList>
    </citation>
    <scope>FUNCTION</scope>
    <scope>DISRUPTION PHENOTYPE</scope>
    <scope>CATALYTIC ACTIVITY</scope>
    <scope>SUBCELLULAR LOCATION</scope>
</reference>
<comment type="function">
    <text evidence="2 4">Monooxygenase that converts the endogenous (and likely the host) jasmonate (JA) to its hydroxylated derivative 12-hydroxyjasmonate (12OH-JA), also known as tuberonic acid, a compound that attenuates or disables jasmonate-based host innate immunity and which is essential for proper initiation and elaboration of the blast disease in rice (PubMed:26258762). ABM, together with a polyketide synthase MGG_04775 and the esterase MGG_04774, share the secondary metabolism gene cluster with ABC transporter ABC3, and therefore may also be involved in the synthesis of other important metabolites such as the ABC3 transporter efflux substrate (ATS) and/or additional polyketides (Probable).</text>
</comment>
<comment type="catalytic activity">
    <reaction evidence="2">
        <text>jasmonate + NADPH + O2 + H(+) = (1R,2R)-12-hydroxyjasmonate + NADP(+) + H2O</text>
        <dbReference type="Rhea" id="RHEA:49984"/>
        <dbReference type="ChEBI" id="CHEBI:15377"/>
        <dbReference type="ChEBI" id="CHEBI:15378"/>
        <dbReference type="ChEBI" id="CHEBI:15379"/>
        <dbReference type="ChEBI" id="CHEBI:57783"/>
        <dbReference type="ChEBI" id="CHEBI:58349"/>
        <dbReference type="ChEBI" id="CHEBI:58431"/>
        <dbReference type="ChEBI" id="CHEBI:132022"/>
        <dbReference type="EC" id="1.14.13.228"/>
    </reaction>
    <physiologicalReaction direction="left-to-right" evidence="2">
        <dbReference type="Rhea" id="RHEA:49985"/>
    </physiologicalReaction>
</comment>
<comment type="subcellular location">
    <subcellularLocation>
        <location evidence="2">Endoplasmic reticulum</location>
    </subcellularLocation>
    <subcellularLocation>
        <location evidence="2">Secreted</location>
    </subcellularLocation>
    <text evidence="2">Associates with the cortical endoplasmic reticulum (ER) network during pre-invasive pathogenic development on the host surface pathogenesis and remains associated with the cortical ER in the invasive hyphae untill the later stages of host colonization (PubMed:26258762). Also associates, albeit weakly, with the biotrophic interfacial complex (BIC), a specialized secretory organelle present on the invasive hyphae in M.oryzae (PubMed:26258762). Secreted specifically during invasive growth (PubMed:26258762).</text>
</comment>
<comment type="disruption phenotype">
    <text evidence="2">Fails to develop blast disease on the rice host but does not affect vegetative growth, asexual development and appressorium formation (PubMed:26258762). Significantly reduces the host penetration ability (PubMed:26258762). Leads to the accumulation of a methylated form of jasmonate (MeJA) resulting in a strong induction of the host defense response in an otherwise susceptible rice plant (PubMed:26258762). Does not affect the ability to cause blast disease in barley (PubMed:26258762).</text>
</comment>
<gene>
    <name evidence="3" type="primary">ABM</name>
    <name type="ORF">MGG_04777</name>
</gene>
<sequence>MFAVIFETRPQPSQFDTYLTIAKSLRPELANIDGFIENIRYKSLSRPGWILSLSFWRDEKSLVRWRTTATHHMAQEKGRDGVLEDYHLRVGQVTASVRSNEVKRVETVDAREQDDVTAVGAAKTVQLVRFQMDRGAGIDAAAGKLGLNPEEPRGLLAWDIMEAVLSPGDMILLASWETGSSSVSIPGADSDEVQVLRDYGKYDRREAPQFYPPAS</sequence>
<keyword id="KW-0256">Endoplasmic reticulum</keyword>
<keyword id="KW-0560">Oxidoreductase</keyword>
<keyword id="KW-1185">Reference proteome</keyword>
<keyword id="KW-0964">Secreted</keyword>
<keyword id="KW-0843">Virulence</keyword>
<accession>P0CU79</accession>
<evidence type="ECO:0000255" key="1">
    <source>
        <dbReference type="PROSITE-ProRule" id="PRU01062"/>
    </source>
</evidence>
<evidence type="ECO:0000269" key="2">
    <source>
    </source>
</evidence>
<evidence type="ECO:0000303" key="3">
    <source>
    </source>
</evidence>
<evidence type="ECO:0000305" key="4">
    <source>
    </source>
</evidence>
<feature type="chain" id="PRO_0000446003" description="Jasmonate monooxygenase ABM">
    <location>
        <begin position="1"/>
        <end position="215"/>
    </location>
</feature>
<feature type="domain" description="ABM" evidence="1">
    <location>
        <begin position="2"/>
        <end position="90"/>
    </location>
</feature>
<name>ABM_PYRO7</name>
<proteinExistence type="evidence at protein level"/>
<protein>
    <recommendedName>
        <fullName evidence="3">Jasmonate monooxygenase ABM</fullName>
        <ecNumber evidence="2">1.14.13.228</ecNumber>
    </recommendedName>
    <alternativeName>
        <fullName evidence="3">Antibiotic biosynthesis monooxygenase</fullName>
        <shortName evidence="3">ABM</shortName>
    </alternativeName>
</protein>
<dbReference type="EC" id="1.14.13.228" evidence="2"/>
<dbReference type="EMBL" id="CM001231">
    <property type="status" value="NOT_ANNOTATED_CDS"/>
    <property type="molecule type" value="Genomic_DNA"/>
</dbReference>
<dbReference type="SMR" id="P0CU79"/>
<dbReference type="STRING" id="242507.P0CU79"/>
<dbReference type="InParanoid" id="P0CU79"/>
<dbReference type="Proteomes" id="UP000009058">
    <property type="component" value="Chromosome 1"/>
</dbReference>
<dbReference type="GO" id="GO:0005783">
    <property type="term" value="C:endoplasmic reticulum"/>
    <property type="evidence" value="ECO:0007669"/>
    <property type="project" value="UniProtKB-SubCell"/>
</dbReference>
<dbReference type="GO" id="GO:0005576">
    <property type="term" value="C:extracellular region"/>
    <property type="evidence" value="ECO:0007669"/>
    <property type="project" value="UniProtKB-SubCell"/>
</dbReference>
<dbReference type="GO" id="GO:0016491">
    <property type="term" value="F:oxidoreductase activity"/>
    <property type="evidence" value="ECO:0007669"/>
    <property type="project" value="UniProtKB-KW"/>
</dbReference>
<dbReference type="Gene3D" id="3.30.70.100">
    <property type="match status" value="1"/>
</dbReference>
<dbReference type="InterPro" id="IPR007138">
    <property type="entry name" value="ABM_dom"/>
</dbReference>
<dbReference type="InterPro" id="IPR011008">
    <property type="entry name" value="Dimeric_a/b-barrel"/>
</dbReference>
<dbReference type="InterPro" id="IPR052936">
    <property type="entry name" value="Jasmonate_Hydroxylase-like"/>
</dbReference>
<dbReference type="PANTHER" id="PTHR37811:SF2">
    <property type="entry name" value="ABM DOMAIN-CONTAINING PROTEIN"/>
    <property type="match status" value="1"/>
</dbReference>
<dbReference type="PANTHER" id="PTHR37811">
    <property type="entry name" value="BLL5343 PROTEIN"/>
    <property type="match status" value="1"/>
</dbReference>
<dbReference type="Pfam" id="PF03992">
    <property type="entry name" value="ABM"/>
    <property type="match status" value="1"/>
</dbReference>
<dbReference type="SUPFAM" id="SSF54909">
    <property type="entry name" value="Dimeric alpha+beta barrel"/>
    <property type="match status" value="1"/>
</dbReference>